<gene>
    <name evidence="1" type="primary">rpo5</name>
    <name evidence="1" type="synonym">rpoH</name>
    <name type="ordered locus">MM_2274</name>
</gene>
<organism>
    <name type="scientific">Methanosarcina mazei (strain ATCC BAA-159 / DSM 3647 / Goe1 / Go1 / JCM 11833 / OCM 88)</name>
    <name type="common">Methanosarcina frisia</name>
    <dbReference type="NCBI Taxonomy" id="192952"/>
    <lineage>
        <taxon>Archaea</taxon>
        <taxon>Methanobacteriati</taxon>
        <taxon>Methanobacteriota</taxon>
        <taxon>Stenosarchaea group</taxon>
        <taxon>Methanomicrobia</taxon>
        <taxon>Methanosarcinales</taxon>
        <taxon>Methanosarcinaceae</taxon>
        <taxon>Methanosarcina</taxon>
    </lineage>
</organism>
<name>RPO5_METMA</name>
<sequence>MTKFSLLDHEAVPKHEIMSEGELKSVLSKYFIEKEQLPKIKVQDPVCKEIGAVVGDVVKITRKSQTAGEADYYRLVIE</sequence>
<protein>
    <recommendedName>
        <fullName evidence="1">DNA-directed RNA polymerase subunit Rpo5</fullName>
        <ecNumber evidence="1">2.7.7.6</ecNumber>
    </recommendedName>
    <alternativeName>
        <fullName evidence="1">DNA-directed RNA polymerase subunit H</fullName>
    </alternativeName>
</protein>
<comment type="function">
    <text evidence="1">DNA-dependent RNA polymerase (RNAP) catalyzes the transcription of DNA into RNA using the four ribonucleoside triphosphates as substrates.</text>
</comment>
<comment type="catalytic activity">
    <reaction evidence="1">
        <text>RNA(n) + a ribonucleoside 5'-triphosphate = RNA(n+1) + diphosphate</text>
        <dbReference type="Rhea" id="RHEA:21248"/>
        <dbReference type="Rhea" id="RHEA-COMP:14527"/>
        <dbReference type="Rhea" id="RHEA-COMP:17342"/>
        <dbReference type="ChEBI" id="CHEBI:33019"/>
        <dbReference type="ChEBI" id="CHEBI:61557"/>
        <dbReference type="ChEBI" id="CHEBI:140395"/>
        <dbReference type="EC" id="2.7.7.6"/>
    </reaction>
</comment>
<comment type="subunit">
    <text evidence="1">Part of the RNA polymerase complex.</text>
</comment>
<comment type="subcellular location">
    <subcellularLocation>
        <location evidence="1">Cytoplasm</location>
    </subcellularLocation>
</comment>
<comment type="similarity">
    <text evidence="1">Belongs to the archaeal Rpo5/eukaryotic RPB5 RNA polymerase subunit family.</text>
</comment>
<comment type="sequence caution" evidence="2">
    <conflict type="erroneous initiation">
        <sequence resource="EMBL-CDS" id="AAM31970"/>
    </conflict>
    <text>Extended N-terminus.</text>
</comment>
<accession>Q8PUQ8</accession>
<keyword id="KW-0963">Cytoplasm</keyword>
<keyword id="KW-0240">DNA-directed RNA polymerase</keyword>
<keyword id="KW-0548">Nucleotidyltransferase</keyword>
<keyword id="KW-0804">Transcription</keyword>
<keyword id="KW-0808">Transferase</keyword>
<dbReference type="EC" id="2.7.7.6" evidence="1"/>
<dbReference type="EMBL" id="AE008384">
    <property type="protein sequence ID" value="AAM31970.1"/>
    <property type="status" value="ALT_INIT"/>
    <property type="molecule type" value="Genomic_DNA"/>
</dbReference>
<dbReference type="RefSeq" id="WP_048037333.1">
    <property type="nucleotide sequence ID" value="NC_003901.1"/>
</dbReference>
<dbReference type="SMR" id="Q8PUQ8"/>
<dbReference type="KEGG" id="mma:MM_2274"/>
<dbReference type="PATRIC" id="fig|192952.21.peg.2604"/>
<dbReference type="eggNOG" id="arCOG04258">
    <property type="taxonomic scope" value="Archaea"/>
</dbReference>
<dbReference type="HOGENOM" id="CLU_058320_4_0_2"/>
<dbReference type="Proteomes" id="UP000000595">
    <property type="component" value="Chromosome"/>
</dbReference>
<dbReference type="GO" id="GO:0005737">
    <property type="term" value="C:cytoplasm"/>
    <property type="evidence" value="ECO:0007669"/>
    <property type="project" value="UniProtKB-SubCell"/>
</dbReference>
<dbReference type="GO" id="GO:0000428">
    <property type="term" value="C:DNA-directed RNA polymerase complex"/>
    <property type="evidence" value="ECO:0007669"/>
    <property type="project" value="UniProtKB-KW"/>
</dbReference>
<dbReference type="GO" id="GO:0003677">
    <property type="term" value="F:DNA binding"/>
    <property type="evidence" value="ECO:0007669"/>
    <property type="project" value="InterPro"/>
</dbReference>
<dbReference type="GO" id="GO:0003899">
    <property type="term" value="F:DNA-directed RNA polymerase activity"/>
    <property type="evidence" value="ECO:0007669"/>
    <property type="project" value="UniProtKB-UniRule"/>
</dbReference>
<dbReference type="GO" id="GO:0006366">
    <property type="term" value="P:transcription by RNA polymerase II"/>
    <property type="evidence" value="ECO:0007669"/>
    <property type="project" value="TreeGrafter"/>
</dbReference>
<dbReference type="GO" id="GO:0006362">
    <property type="term" value="P:transcription elongation by RNA polymerase I"/>
    <property type="evidence" value="ECO:0007669"/>
    <property type="project" value="TreeGrafter"/>
</dbReference>
<dbReference type="GO" id="GO:0042797">
    <property type="term" value="P:tRNA transcription by RNA polymerase III"/>
    <property type="evidence" value="ECO:0007669"/>
    <property type="project" value="TreeGrafter"/>
</dbReference>
<dbReference type="Gene3D" id="3.90.940.20">
    <property type="entry name" value="RPB5-like RNA polymerase subunit"/>
    <property type="match status" value="1"/>
</dbReference>
<dbReference type="HAMAP" id="MF_00025">
    <property type="entry name" value="RNApol_Rpo5_RPB5"/>
    <property type="match status" value="1"/>
</dbReference>
<dbReference type="InterPro" id="IPR014381">
    <property type="entry name" value="Arch_Rpo5/euc_Rpb5"/>
</dbReference>
<dbReference type="InterPro" id="IPR000783">
    <property type="entry name" value="RNA_pol_subH/Rpb5_C"/>
</dbReference>
<dbReference type="InterPro" id="IPR020608">
    <property type="entry name" value="RNA_pol_subH/Rpb5_CS"/>
</dbReference>
<dbReference type="InterPro" id="IPR035913">
    <property type="entry name" value="RPB5-like_sf"/>
</dbReference>
<dbReference type="NCBIfam" id="NF007129">
    <property type="entry name" value="PRK09570.1"/>
    <property type="match status" value="1"/>
</dbReference>
<dbReference type="PANTHER" id="PTHR10535">
    <property type="entry name" value="DNA-DIRECTED RNA POLYMERASES I, II, AND III SUBUNIT RPABC1"/>
    <property type="match status" value="1"/>
</dbReference>
<dbReference type="PANTHER" id="PTHR10535:SF0">
    <property type="entry name" value="DNA-DIRECTED RNA POLYMERASES I, II, AND III SUBUNIT RPABC1"/>
    <property type="match status" value="1"/>
</dbReference>
<dbReference type="Pfam" id="PF01191">
    <property type="entry name" value="RNA_pol_Rpb5_C"/>
    <property type="match status" value="1"/>
</dbReference>
<dbReference type="SUPFAM" id="SSF55287">
    <property type="entry name" value="RPB5-like RNA polymerase subunit"/>
    <property type="match status" value="1"/>
</dbReference>
<dbReference type="PROSITE" id="PS01110">
    <property type="entry name" value="RNA_POL_H_23KD"/>
    <property type="match status" value="1"/>
</dbReference>
<evidence type="ECO:0000255" key="1">
    <source>
        <dbReference type="HAMAP-Rule" id="MF_00025"/>
    </source>
</evidence>
<evidence type="ECO:0000305" key="2"/>
<proteinExistence type="inferred from homology"/>
<reference key="1">
    <citation type="journal article" date="2002" name="J. Mol. Microbiol. Biotechnol.">
        <title>The genome of Methanosarcina mazei: evidence for lateral gene transfer between Bacteria and Archaea.</title>
        <authorList>
            <person name="Deppenmeier U."/>
            <person name="Johann A."/>
            <person name="Hartsch T."/>
            <person name="Merkl R."/>
            <person name="Schmitz R.A."/>
            <person name="Martinez-Arias R."/>
            <person name="Henne A."/>
            <person name="Wiezer A."/>
            <person name="Baeumer S."/>
            <person name="Jacobi C."/>
            <person name="Brueggemann H."/>
            <person name="Lienard T."/>
            <person name="Christmann A."/>
            <person name="Boemecke M."/>
            <person name="Steckel S."/>
            <person name="Bhattacharyya A."/>
            <person name="Lykidis A."/>
            <person name="Overbeek R."/>
            <person name="Klenk H.-P."/>
            <person name="Gunsalus R.P."/>
            <person name="Fritz H.-J."/>
            <person name="Gottschalk G."/>
        </authorList>
    </citation>
    <scope>NUCLEOTIDE SEQUENCE [LARGE SCALE GENOMIC DNA]</scope>
    <source>
        <strain>ATCC BAA-159 / DSM 3647 / Goe1 / Go1 / JCM 11833 / OCM 88</strain>
    </source>
</reference>
<feature type="chain" id="PRO_0000146094" description="DNA-directed RNA polymerase subunit Rpo5">
    <location>
        <begin position="1"/>
        <end position="78"/>
    </location>
</feature>